<accession>C5C3D1</accession>
<reference key="1">
    <citation type="journal article" date="2009" name="Stand. Genomic Sci.">
        <title>Complete genome sequence of Beutenbergia cavernae type strain (HKI 0122).</title>
        <authorList>
            <person name="Land M."/>
            <person name="Pukall R."/>
            <person name="Abt B."/>
            <person name="Goker M."/>
            <person name="Rohde M."/>
            <person name="Glavina Del Rio T."/>
            <person name="Tice H."/>
            <person name="Copeland A."/>
            <person name="Cheng J.F."/>
            <person name="Lucas S."/>
            <person name="Chen F."/>
            <person name="Nolan M."/>
            <person name="Bruce D."/>
            <person name="Goodwin L."/>
            <person name="Pitluck S."/>
            <person name="Ivanova N."/>
            <person name="Mavromatis K."/>
            <person name="Ovchinnikova G."/>
            <person name="Pati A."/>
            <person name="Chen A."/>
            <person name="Palaniappan K."/>
            <person name="Hauser L."/>
            <person name="Chang Y.J."/>
            <person name="Jefferies C.C."/>
            <person name="Saunders E."/>
            <person name="Brettin T."/>
            <person name="Detter J.C."/>
            <person name="Han C."/>
            <person name="Chain P."/>
            <person name="Bristow J."/>
            <person name="Eisen J.A."/>
            <person name="Markowitz V."/>
            <person name="Hugenholtz P."/>
            <person name="Kyrpides N.C."/>
            <person name="Klenk H.P."/>
            <person name="Lapidus A."/>
        </authorList>
    </citation>
    <scope>NUCLEOTIDE SEQUENCE [LARGE SCALE GENOMIC DNA]</scope>
    <source>
        <strain>ATCC BAA-8 / DSM 12333 / CCUG 43141 / JCM 11478 / NBRC 16432 / NCIMB 13614 / HKI 0122</strain>
    </source>
</reference>
<protein>
    <recommendedName>
        <fullName evidence="1">3-isopropylmalate dehydratase small subunit</fullName>
        <ecNumber evidence="1">4.2.1.33</ecNumber>
    </recommendedName>
    <alternativeName>
        <fullName evidence="1">Alpha-IPM isomerase</fullName>
        <shortName evidence="1">IPMI</shortName>
    </alternativeName>
    <alternativeName>
        <fullName evidence="1">Isopropylmalate isomerase</fullName>
    </alternativeName>
</protein>
<dbReference type="EC" id="4.2.1.33" evidence="1"/>
<dbReference type="EMBL" id="CP001618">
    <property type="protein sequence ID" value="ACQ79830.1"/>
    <property type="molecule type" value="Genomic_DNA"/>
</dbReference>
<dbReference type="RefSeq" id="WP_015882070.1">
    <property type="nucleotide sequence ID" value="NC_012669.1"/>
</dbReference>
<dbReference type="SMR" id="C5C3D1"/>
<dbReference type="STRING" id="471853.Bcav_1574"/>
<dbReference type="KEGG" id="bcv:Bcav_1574"/>
<dbReference type="eggNOG" id="COG0066">
    <property type="taxonomic scope" value="Bacteria"/>
</dbReference>
<dbReference type="HOGENOM" id="CLU_081378_0_1_11"/>
<dbReference type="OrthoDB" id="9777465at2"/>
<dbReference type="UniPathway" id="UPA00048">
    <property type="reaction ID" value="UER00071"/>
</dbReference>
<dbReference type="Proteomes" id="UP000007962">
    <property type="component" value="Chromosome"/>
</dbReference>
<dbReference type="GO" id="GO:0009316">
    <property type="term" value="C:3-isopropylmalate dehydratase complex"/>
    <property type="evidence" value="ECO:0007669"/>
    <property type="project" value="InterPro"/>
</dbReference>
<dbReference type="GO" id="GO:0003861">
    <property type="term" value="F:3-isopropylmalate dehydratase activity"/>
    <property type="evidence" value="ECO:0007669"/>
    <property type="project" value="UniProtKB-UniRule"/>
</dbReference>
<dbReference type="GO" id="GO:0009098">
    <property type="term" value="P:L-leucine biosynthetic process"/>
    <property type="evidence" value="ECO:0007669"/>
    <property type="project" value="UniProtKB-UniRule"/>
</dbReference>
<dbReference type="CDD" id="cd01577">
    <property type="entry name" value="IPMI_Swivel"/>
    <property type="match status" value="1"/>
</dbReference>
<dbReference type="FunFam" id="3.20.19.10:FF:000003">
    <property type="entry name" value="3-isopropylmalate dehydratase small subunit"/>
    <property type="match status" value="1"/>
</dbReference>
<dbReference type="Gene3D" id="3.20.19.10">
    <property type="entry name" value="Aconitase, domain 4"/>
    <property type="match status" value="1"/>
</dbReference>
<dbReference type="HAMAP" id="MF_01031">
    <property type="entry name" value="LeuD_type1"/>
    <property type="match status" value="1"/>
</dbReference>
<dbReference type="InterPro" id="IPR004431">
    <property type="entry name" value="3-IsopropMal_deHydase_ssu"/>
</dbReference>
<dbReference type="InterPro" id="IPR015928">
    <property type="entry name" value="Aconitase/3IPM_dehydase_swvl"/>
</dbReference>
<dbReference type="InterPro" id="IPR000573">
    <property type="entry name" value="AconitaseA/IPMdHydase_ssu_swvl"/>
</dbReference>
<dbReference type="InterPro" id="IPR033940">
    <property type="entry name" value="IPMI_Swivel"/>
</dbReference>
<dbReference type="InterPro" id="IPR050075">
    <property type="entry name" value="LeuD"/>
</dbReference>
<dbReference type="NCBIfam" id="TIGR00171">
    <property type="entry name" value="leuD"/>
    <property type="match status" value="1"/>
</dbReference>
<dbReference type="NCBIfam" id="NF002458">
    <property type="entry name" value="PRK01641.1"/>
    <property type="match status" value="1"/>
</dbReference>
<dbReference type="PANTHER" id="PTHR43345:SF5">
    <property type="entry name" value="3-ISOPROPYLMALATE DEHYDRATASE SMALL SUBUNIT"/>
    <property type="match status" value="1"/>
</dbReference>
<dbReference type="PANTHER" id="PTHR43345">
    <property type="entry name" value="3-ISOPROPYLMALATE DEHYDRATASE SMALL SUBUNIT 2-RELATED-RELATED"/>
    <property type="match status" value="1"/>
</dbReference>
<dbReference type="Pfam" id="PF00694">
    <property type="entry name" value="Aconitase_C"/>
    <property type="match status" value="1"/>
</dbReference>
<dbReference type="SUPFAM" id="SSF52016">
    <property type="entry name" value="LeuD/IlvD-like"/>
    <property type="match status" value="1"/>
</dbReference>
<feature type="chain" id="PRO_1000213346" description="3-isopropylmalate dehydratase small subunit">
    <location>
        <begin position="1"/>
        <end position="212"/>
    </location>
</feature>
<sequence length="212" mass="23307">MEKFTTHTGVGVPLRRSNVDTDQIIPAVYLKRVTRTGFEDALFAAWRGNETFVLNQPAYTHGSVLVAGPDFGTGSSREHAVWALKDYGFRVVIASRFADIFRGNSGKQGLLAAQVAQDDVELIWKVLENSPGTEVTVDLAAKQVTVADIVAPFQIDDYTRWRLLEGLDDIGLTLQHADEITAFEATREPWRPLTLPAKHLPAVPITAARPVA</sequence>
<name>LEUD_BEUC1</name>
<proteinExistence type="inferred from homology"/>
<gene>
    <name evidence="1" type="primary">leuD</name>
    <name type="ordered locus">Bcav_1574</name>
</gene>
<organism>
    <name type="scientific">Beutenbergia cavernae (strain ATCC BAA-8 / DSM 12333 / CCUG 43141 / JCM 11478 / NBRC 16432 / NCIMB 13614 / HKI 0122)</name>
    <dbReference type="NCBI Taxonomy" id="471853"/>
    <lineage>
        <taxon>Bacteria</taxon>
        <taxon>Bacillati</taxon>
        <taxon>Actinomycetota</taxon>
        <taxon>Actinomycetes</taxon>
        <taxon>Micrococcales</taxon>
        <taxon>Beutenbergiaceae</taxon>
        <taxon>Beutenbergia</taxon>
    </lineage>
</organism>
<evidence type="ECO:0000255" key="1">
    <source>
        <dbReference type="HAMAP-Rule" id="MF_01031"/>
    </source>
</evidence>
<comment type="function">
    <text evidence="1">Catalyzes the isomerization between 2-isopropylmalate and 3-isopropylmalate, via the formation of 2-isopropylmaleate.</text>
</comment>
<comment type="catalytic activity">
    <reaction evidence="1">
        <text>(2R,3S)-3-isopropylmalate = (2S)-2-isopropylmalate</text>
        <dbReference type="Rhea" id="RHEA:32287"/>
        <dbReference type="ChEBI" id="CHEBI:1178"/>
        <dbReference type="ChEBI" id="CHEBI:35121"/>
        <dbReference type="EC" id="4.2.1.33"/>
    </reaction>
</comment>
<comment type="pathway">
    <text evidence="1">Amino-acid biosynthesis; L-leucine biosynthesis; L-leucine from 3-methyl-2-oxobutanoate: step 2/4.</text>
</comment>
<comment type="subunit">
    <text evidence="1">Heterodimer of LeuC and LeuD.</text>
</comment>
<comment type="similarity">
    <text evidence="1">Belongs to the LeuD family. LeuD type 1 subfamily.</text>
</comment>
<keyword id="KW-0028">Amino-acid biosynthesis</keyword>
<keyword id="KW-0100">Branched-chain amino acid biosynthesis</keyword>
<keyword id="KW-0432">Leucine biosynthesis</keyword>
<keyword id="KW-0456">Lyase</keyword>
<keyword id="KW-1185">Reference proteome</keyword>